<comment type="function">
    <text evidence="1">Increases the formation of ribosomal termination complexes and stimulates activities of RF-1 and RF-2. It binds guanine nucleotides and has strong preference for UGA stop codons. It may interact directly with the ribosome. The stimulation of RF-1 and RF-2 is significantly reduced by GTP and GDP, but not by GMP.</text>
</comment>
<comment type="subcellular location">
    <subcellularLocation>
        <location evidence="1">Cytoplasm</location>
    </subcellularLocation>
</comment>
<comment type="similarity">
    <text evidence="1">Belongs to the TRAFAC class translation factor GTPase superfamily. Classic translation factor GTPase family. PrfC subfamily.</text>
</comment>
<gene>
    <name evidence="1" type="primary">prfC</name>
    <name type="ordered locus">SSON_4525</name>
</gene>
<dbReference type="EMBL" id="CP000038">
    <property type="protein sequence ID" value="AAZ90993.1"/>
    <property type="molecule type" value="Genomic_DNA"/>
</dbReference>
<dbReference type="RefSeq" id="WP_000175946.1">
    <property type="nucleotide sequence ID" value="NC_007384.1"/>
</dbReference>
<dbReference type="SMR" id="Q3YU19"/>
<dbReference type="GeneID" id="93777470"/>
<dbReference type="KEGG" id="ssn:SSON_4525"/>
<dbReference type="HOGENOM" id="CLU_002794_2_1_6"/>
<dbReference type="Proteomes" id="UP000002529">
    <property type="component" value="Chromosome"/>
</dbReference>
<dbReference type="GO" id="GO:0005829">
    <property type="term" value="C:cytosol"/>
    <property type="evidence" value="ECO:0007669"/>
    <property type="project" value="TreeGrafter"/>
</dbReference>
<dbReference type="GO" id="GO:0005525">
    <property type="term" value="F:GTP binding"/>
    <property type="evidence" value="ECO:0007669"/>
    <property type="project" value="UniProtKB-UniRule"/>
</dbReference>
<dbReference type="GO" id="GO:0003924">
    <property type="term" value="F:GTPase activity"/>
    <property type="evidence" value="ECO:0007669"/>
    <property type="project" value="InterPro"/>
</dbReference>
<dbReference type="GO" id="GO:0097216">
    <property type="term" value="F:guanosine tetraphosphate binding"/>
    <property type="evidence" value="ECO:0007669"/>
    <property type="project" value="UniProtKB-ARBA"/>
</dbReference>
<dbReference type="GO" id="GO:0016150">
    <property type="term" value="F:translation release factor activity, codon nonspecific"/>
    <property type="evidence" value="ECO:0007669"/>
    <property type="project" value="TreeGrafter"/>
</dbReference>
<dbReference type="GO" id="GO:0016149">
    <property type="term" value="F:translation release factor activity, codon specific"/>
    <property type="evidence" value="ECO:0007669"/>
    <property type="project" value="UniProtKB-UniRule"/>
</dbReference>
<dbReference type="GO" id="GO:0006449">
    <property type="term" value="P:regulation of translational termination"/>
    <property type="evidence" value="ECO:0007669"/>
    <property type="project" value="UniProtKB-UniRule"/>
</dbReference>
<dbReference type="CDD" id="cd04169">
    <property type="entry name" value="RF3"/>
    <property type="match status" value="1"/>
</dbReference>
<dbReference type="CDD" id="cd03689">
    <property type="entry name" value="RF3_II"/>
    <property type="match status" value="1"/>
</dbReference>
<dbReference type="CDD" id="cd16259">
    <property type="entry name" value="RF3_III"/>
    <property type="match status" value="1"/>
</dbReference>
<dbReference type="FunFam" id="2.40.30.10:FF:000040">
    <property type="entry name" value="Peptide chain release factor 3"/>
    <property type="match status" value="1"/>
</dbReference>
<dbReference type="FunFam" id="3.30.70.3280:FF:000001">
    <property type="entry name" value="Peptide chain release factor 3"/>
    <property type="match status" value="1"/>
</dbReference>
<dbReference type="FunFam" id="3.40.50.300:FF:000184">
    <property type="entry name" value="Peptide chain release factor 3"/>
    <property type="match status" value="1"/>
</dbReference>
<dbReference type="FunFam" id="3.40.50.300:FF:000253">
    <property type="entry name" value="Peptide chain release factor 3"/>
    <property type="match status" value="1"/>
</dbReference>
<dbReference type="Gene3D" id="3.40.50.300">
    <property type="entry name" value="P-loop containing nucleotide triphosphate hydrolases"/>
    <property type="match status" value="3"/>
</dbReference>
<dbReference type="Gene3D" id="3.30.70.3280">
    <property type="entry name" value="Peptide chain release factor 3, domain III"/>
    <property type="match status" value="1"/>
</dbReference>
<dbReference type="HAMAP" id="MF_00072">
    <property type="entry name" value="Rel_fac_3"/>
    <property type="match status" value="1"/>
</dbReference>
<dbReference type="InterPro" id="IPR053905">
    <property type="entry name" value="EF-G-like_DII"/>
</dbReference>
<dbReference type="InterPro" id="IPR035647">
    <property type="entry name" value="EFG_III/V"/>
</dbReference>
<dbReference type="InterPro" id="IPR031157">
    <property type="entry name" value="G_TR_CS"/>
</dbReference>
<dbReference type="InterPro" id="IPR027417">
    <property type="entry name" value="P-loop_NTPase"/>
</dbReference>
<dbReference type="InterPro" id="IPR004548">
    <property type="entry name" value="PrfC"/>
</dbReference>
<dbReference type="InterPro" id="IPR032090">
    <property type="entry name" value="RF3_C"/>
</dbReference>
<dbReference type="InterPro" id="IPR038467">
    <property type="entry name" value="RF3_dom_3_sf"/>
</dbReference>
<dbReference type="InterPro" id="IPR041732">
    <property type="entry name" value="RF3_GTP-bd"/>
</dbReference>
<dbReference type="InterPro" id="IPR005225">
    <property type="entry name" value="Small_GTP-bd"/>
</dbReference>
<dbReference type="InterPro" id="IPR000795">
    <property type="entry name" value="T_Tr_GTP-bd_dom"/>
</dbReference>
<dbReference type="InterPro" id="IPR009000">
    <property type="entry name" value="Transl_B-barrel_sf"/>
</dbReference>
<dbReference type="NCBIfam" id="TIGR00503">
    <property type="entry name" value="prfC"/>
    <property type="match status" value="1"/>
</dbReference>
<dbReference type="NCBIfam" id="NF001964">
    <property type="entry name" value="PRK00741.1"/>
    <property type="match status" value="1"/>
</dbReference>
<dbReference type="NCBIfam" id="TIGR00231">
    <property type="entry name" value="small_GTP"/>
    <property type="match status" value="1"/>
</dbReference>
<dbReference type="PANTHER" id="PTHR43556">
    <property type="entry name" value="PEPTIDE CHAIN RELEASE FACTOR RF3"/>
    <property type="match status" value="1"/>
</dbReference>
<dbReference type="PANTHER" id="PTHR43556:SF2">
    <property type="entry name" value="PEPTIDE CHAIN RELEASE FACTOR RF3"/>
    <property type="match status" value="1"/>
</dbReference>
<dbReference type="Pfam" id="PF22042">
    <property type="entry name" value="EF-G_D2"/>
    <property type="match status" value="1"/>
</dbReference>
<dbReference type="Pfam" id="PF00009">
    <property type="entry name" value="GTP_EFTU"/>
    <property type="match status" value="1"/>
</dbReference>
<dbReference type="Pfam" id="PF16658">
    <property type="entry name" value="RF3_C"/>
    <property type="match status" value="1"/>
</dbReference>
<dbReference type="PRINTS" id="PR00315">
    <property type="entry name" value="ELONGATNFCT"/>
</dbReference>
<dbReference type="SUPFAM" id="SSF54980">
    <property type="entry name" value="EF-G C-terminal domain-like"/>
    <property type="match status" value="1"/>
</dbReference>
<dbReference type="SUPFAM" id="SSF52540">
    <property type="entry name" value="P-loop containing nucleoside triphosphate hydrolases"/>
    <property type="match status" value="1"/>
</dbReference>
<dbReference type="SUPFAM" id="SSF50447">
    <property type="entry name" value="Translation proteins"/>
    <property type="match status" value="1"/>
</dbReference>
<dbReference type="PROSITE" id="PS00301">
    <property type="entry name" value="G_TR_1"/>
    <property type="match status" value="1"/>
</dbReference>
<dbReference type="PROSITE" id="PS51722">
    <property type="entry name" value="G_TR_2"/>
    <property type="match status" value="1"/>
</dbReference>
<evidence type="ECO:0000255" key="1">
    <source>
        <dbReference type="HAMAP-Rule" id="MF_00072"/>
    </source>
</evidence>
<keyword id="KW-0963">Cytoplasm</keyword>
<keyword id="KW-0342">GTP-binding</keyword>
<keyword id="KW-0547">Nucleotide-binding</keyword>
<keyword id="KW-0648">Protein biosynthesis</keyword>
<keyword id="KW-1185">Reference proteome</keyword>
<name>RF3_SHISS</name>
<proteinExistence type="inferred from homology"/>
<protein>
    <recommendedName>
        <fullName evidence="1">Peptide chain release factor 3</fullName>
        <shortName evidence="1">RF-3</shortName>
    </recommendedName>
</protein>
<reference key="1">
    <citation type="journal article" date="2005" name="Nucleic Acids Res.">
        <title>Genome dynamics and diversity of Shigella species, the etiologic agents of bacillary dysentery.</title>
        <authorList>
            <person name="Yang F."/>
            <person name="Yang J."/>
            <person name="Zhang X."/>
            <person name="Chen L."/>
            <person name="Jiang Y."/>
            <person name="Yan Y."/>
            <person name="Tang X."/>
            <person name="Wang J."/>
            <person name="Xiong Z."/>
            <person name="Dong J."/>
            <person name="Xue Y."/>
            <person name="Zhu Y."/>
            <person name="Xu X."/>
            <person name="Sun L."/>
            <person name="Chen S."/>
            <person name="Nie H."/>
            <person name="Peng J."/>
            <person name="Xu J."/>
            <person name="Wang Y."/>
            <person name="Yuan Z."/>
            <person name="Wen Y."/>
            <person name="Yao Z."/>
            <person name="Shen Y."/>
            <person name="Qiang B."/>
            <person name="Hou Y."/>
            <person name="Yu J."/>
            <person name="Jin Q."/>
        </authorList>
    </citation>
    <scope>NUCLEOTIDE SEQUENCE [LARGE SCALE GENOMIC DNA]</scope>
    <source>
        <strain>Ss046</strain>
    </source>
</reference>
<organism>
    <name type="scientific">Shigella sonnei (strain Ss046)</name>
    <dbReference type="NCBI Taxonomy" id="300269"/>
    <lineage>
        <taxon>Bacteria</taxon>
        <taxon>Pseudomonadati</taxon>
        <taxon>Pseudomonadota</taxon>
        <taxon>Gammaproteobacteria</taxon>
        <taxon>Enterobacterales</taxon>
        <taxon>Enterobacteriaceae</taxon>
        <taxon>Shigella</taxon>
    </lineage>
</organism>
<sequence length="529" mass="59563">MTLSPYLQEVAKRRTFAIISHPDAGKTTITEKVLLFGQAIQTAGTVKGRGSNQHAKSDWMEMEKQRGISITTSVMQFPYHDCLVNLLDTPGHEDFSEDTYRTLTAVDCCLMVIDAAKGVEDRTRKLMEVTRLRDTPILTFMNKLDRDIRDPMELLDEVENELKIGCAPITWPIGCGKLFKGVYHLYKDETYLYQSGKGHTIQEVRIVKGLNNPDLDAAVGEDLAQQLRDELELVKGASNEFDKELFLAGEITPVFFGTALGNFGVDHMLDGLVEWAPAPMPRQTDTRTVEASEDKFTGFVFKIQANMDPKHRDRVAFMRVVSGKYEKGMKLRQVRTAKDVVISDALTFMAGDRSHVEEAYPGDILGLHNHGTIQIGDTFTQGEMMKFTGIPNFAPELFRRIRLKDPLKQKQLLKGLVQLSEEGAVQVFRPISNNDLIVGAVGVLQFDVVVSRLKSEYSVEAVYESVNVATARWVECADAKKFEEFKRKNESQLALDGGDNLAYIATSMVNLRLAQERYPDVQFHQTREH</sequence>
<feature type="chain" id="PRO_0000242209" description="Peptide chain release factor 3">
    <location>
        <begin position="1"/>
        <end position="529"/>
    </location>
</feature>
<feature type="domain" description="tr-type G">
    <location>
        <begin position="11"/>
        <end position="280"/>
    </location>
</feature>
<feature type="binding site" evidence="1">
    <location>
        <begin position="20"/>
        <end position="27"/>
    </location>
    <ligand>
        <name>GTP</name>
        <dbReference type="ChEBI" id="CHEBI:37565"/>
    </ligand>
</feature>
<feature type="binding site" evidence="1">
    <location>
        <begin position="88"/>
        <end position="92"/>
    </location>
    <ligand>
        <name>GTP</name>
        <dbReference type="ChEBI" id="CHEBI:37565"/>
    </ligand>
</feature>
<feature type="binding site" evidence="1">
    <location>
        <begin position="142"/>
        <end position="145"/>
    </location>
    <ligand>
        <name>GTP</name>
        <dbReference type="ChEBI" id="CHEBI:37565"/>
    </ligand>
</feature>
<accession>Q3YU19</accession>